<evidence type="ECO:0000255" key="1">
    <source>
        <dbReference type="PROSITE-ProRule" id="PRU00981"/>
    </source>
</evidence>
<evidence type="ECO:0000256" key="2">
    <source>
        <dbReference type="SAM" id="MobiDB-lite"/>
    </source>
</evidence>
<evidence type="ECO:0000269" key="3">
    <source>
    </source>
</evidence>
<evidence type="ECO:0000303" key="4">
    <source>
    </source>
</evidence>
<evidence type="ECO:0000303" key="5">
    <source>
    </source>
</evidence>
<evidence type="ECO:0000305" key="6"/>
<evidence type="ECO:0000312" key="7">
    <source>
        <dbReference type="EMBL" id="AAN05491.1"/>
    </source>
</evidence>
<evidence type="ECO:0000312" key="8">
    <source>
        <dbReference type="EMBL" id="ABF93851.1"/>
    </source>
</evidence>
<evidence type="ECO:0000312" key="9">
    <source>
        <dbReference type="EMBL" id="BAS82180.1"/>
    </source>
</evidence>
<keyword id="KW-0963">Cytoplasm</keyword>
<keyword id="KW-0238">DNA-binding</keyword>
<keyword id="KW-0539">Nucleus</keyword>
<keyword id="KW-0611">Plant defense</keyword>
<keyword id="KW-1185">Reference proteome</keyword>
<keyword id="KW-0804">Transcription</keyword>
<keyword id="KW-0805">Transcription regulation</keyword>
<comment type="function">
    <text evidence="3">Transcription factor involved in defense responses that functions downstream of RAC1 and upstream of PAL1 and WRKY19 genes.</text>
</comment>
<comment type="subunit">
    <text evidence="3">Interacts with LAX1.</text>
</comment>
<comment type="subcellular location">
    <subcellularLocation>
        <location evidence="1 3">Nucleus</location>
    </subcellularLocation>
    <subcellularLocation>
        <location evidence="3">Cytoplasm</location>
    </subcellularLocation>
    <text evidence="3">Localizes mainly in the nucleus.</text>
</comment>
<comment type="induction">
    <text evidence="3">Induced by sphingolipid elicitor and chitin elicitor, and a compatible race of the rice blast fungus Magnaporthe oryzae.</text>
</comment>
<comment type="PTM">
    <text evidence="3">Phosphorylated by MAPK3 and MAPK6.</text>
</comment>
<comment type="similarity">
    <text evidence="6">Belongs to the bHLH protein family.</text>
</comment>
<comment type="sequence caution" evidence="6">
    <conflict type="erroneous gene model prediction">
        <sequence resource="EMBL-CDS" id="AAN05491"/>
    </conflict>
</comment>
<comment type="sequence caution" evidence="6">
    <conflict type="erroneous gene model prediction">
        <sequence resource="EMBL-CDS" id="BAF10803"/>
    </conflict>
</comment>
<gene>
    <name evidence="6" type="primary">BHLH3</name>
    <name evidence="4" type="synonym">BHLH003</name>
    <name evidence="5" type="synonym">RAI1</name>
    <name evidence="9" type="ordered locus">Os03g0135700</name>
    <name evidence="8" type="ordered locus">LOC_Os03g04310</name>
    <name evidence="7" type="ORF">OJ1006F06.1</name>
</gene>
<organism>
    <name type="scientific">Oryza sativa subsp. japonica</name>
    <name type="common">Rice</name>
    <dbReference type="NCBI Taxonomy" id="39947"/>
    <lineage>
        <taxon>Eukaryota</taxon>
        <taxon>Viridiplantae</taxon>
        <taxon>Streptophyta</taxon>
        <taxon>Embryophyta</taxon>
        <taxon>Tracheophyta</taxon>
        <taxon>Spermatophyta</taxon>
        <taxon>Magnoliopsida</taxon>
        <taxon>Liliopsida</taxon>
        <taxon>Poales</taxon>
        <taxon>Poaceae</taxon>
        <taxon>BOP clade</taxon>
        <taxon>Oryzoideae</taxon>
        <taxon>Oryzeae</taxon>
        <taxon>Oryzinae</taxon>
        <taxon>Oryza</taxon>
        <taxon>Oryza sativa</taxon>
    </lineage>
</organism>
<name>BH003_ORYSJ</name>
<reference key="1">
    <citation type="journal article" date="2009" name="Plant Physiol.">
        <title>GRASSIUS: a platform for comparative regulatory genomics across the grasses.</title>
        <authorList>
            <person name="Yilmaz A."/>
            <person name="Nishiyama M.Y."/>
            <person name="Fuentes B.G."/>
            <person name="Souza G.M."/>
            <person name="Janies D."/>
            <person name="Gray J."/>
            <person name="Grotewold E."/>
        </authorList>
    </citation>
    <scope>NUCLEOTIDE SEQUENCE [MRNA]</scope>
</reference>
<reference key="2">
    <citation type="journal article" date="2005" name="Genome Res.">
        <title>Sequence, annotation, and analysis of synteny between rice chromosome 3 and diverged grass species.</title>
        <authorList>
            <consortium name="The rice chromosome 3 sequencing consortium"/>
            <person name="Buell C.R."/>
            <person name="Yuan Q."/>
            <person name="Ouyang S."/>
            <person name="Liu J."/>
            <person name="Zhu W."/>
            <person name="Wang A."/>
            <person name="Maiti R."/>
            <person name="Haas B."/>
            <person name="Wortman J."/>
            <person name="Pertea M."/>
            <person name="Jones K.M."/>
            <person name="Kim M."/>
            <person name="Overton L."/>
            <person name="Tsitrin T."/>
            <person name="Fadrosh D."/>
            <person name="Bera J."/>
            <person name="Weaver B."/>
            <person name="Jin S."/>
            <person name="Johri S."/>
            <person name="Reardon M."/>
            <person name="Webb K."/>
            <person name="Hill J."/>
            <person name="Moffat K."/>
            <person name="Tallon L."/>
            <person name="Van Aken S."/>
            <person name="Lewis M."/>
            <person name="Utterback T."/>
            <person name="Feldblyum T."/>
            <person name="Zismann V."/>
            <person name="Iobst S."/>
            <person name="Hsiao J."/>
            <person name="de Vazeille A.R."/>
            <person name="Salzberg S.L."/>
            <person name="White O."/>
            <person name="Fraser C.M."/>
            <person name="Yu Y."/>
            <person name="Kim H."/>
            <person name="Rambo T."/>
            <person name="Currie J."/>
            <person name="Collura K."/>
            <person name="Kernodle-Thompson S."/>
            <person name="Wei F."/>
            <person name="Kudrna K."/>
            <person name="Ammiraju J.S.S."/>
            <person name="Luo M."/>
            <person name="Goicoechea J.L."/>
            <person name="Wing R.A."/>
            <person name="Henry D."/>
            <person name="Oates R."/>
            <person name="Palmer M."/>
            <person name="Pries G."/>
            <person name="Saski C."/>
            <person name="Simmons J."/>
            <person name="Soderlund C."/>
            <person name="Nelson W."/>
            <person name="de la Bastide M."/>
            <person name="Spiegel L."/>
            <person name="Nascimento L."/>
            <person name="Huang E."/>
            <person name="Preston R."/>
            <person name="Zutavern T."/>
            <person name="Palmer L."/>
            <person name="O'Shaughnessy A."/>
            <person name="Dike S."/>
            <person name="McCombie W.R."/>
            <person name="Minx P."/>
            <person name="Cordum H."/>
            <person name="Wilson R."/>
            <person name="Jin W."/>
            <person name="Lee H.R."/>
            <person name="Jiang J."/>
            <person name="Jackson S."/>
        </authorList>
    </citation>
    <scope>NUCLEOTIDE SEQUENCE [LARGE SCALE GENOMIC DNA]</scope>
    <source>
        <strain>cv. Nipponbare</strain>
    </source>
</reference>
<reference key="3">
    <citation type="journal article" date="2005" name="Nature">
        <title>The map-based sequence of the rice genome.</title>
        <authorList>
            <consortium name="International rice genome sequencing project (IRGSP)"/>
        </authorList>
    </citation>
    <scope>NUCLEOTIDE SEQUENCE [LARGE SCALE GENOMIC DNA]</scope>
    <source>
        <strain>cv. Nipponbare</strain>
    </source>
</reference>
<reference key="4">
    <citation type="journal article" date="2008" name="Nucleic Acids Res.">
        <title>The rice annotation project database (RAP-DB): 2008 update.</title>
        <authorList>
            <consortium name="The rice annotation project (RAP)"/>
        </authorList>
    </citation>
    <scope>GENOME REANNOTATION</scope>
    <source>
        <strain>cv. Nipponbare</strain>
    </source>
</reference>
<reference key="5">
    <citation type="journal article" date="2013" name="Rice">
        <title>Improvement of the Oryza sativa Nipponbare reference genome using next generation sequence and optical map data.</title>
        <authorList>
            <person name="Kawahara Y."/>
            <person name="de la Bastide M."/>
            <person name="Hamilton J.P."/>
            <person name="Kanamori H."/>
            <person name="McCombie W.R."/>
            <person name="Ouyang S."/>
            <person name="Schwartz D.C."/>
            <person name="Tanaka T."/>
            <person name="Wu J."/>
            <person name="Zhou S."/>
            <person name="Childs K.L."/>
            <person name="Davidson R.M."/>
            <person name="Lin H."/>
            <person name="Quesada-Ocampo L."/>
            <person name="Vaillancourt B."/>
            <person name="Sakai H."/>
            <person name="Lee S.S."/>
            <person name="Kim J."/>
            <person name="Numa H."/>
            <person name="Itoh T."/>
            <person name="Buell C.R."/>
            <person name="Matsumoto T."/>
        </authorList>
    </citation>
    <scope>GENOME REANNOTATION</scope>
    <source>
        <strain>cv. Nipponbare</strain>
    </source>
</reference>
<reference key="6">
    <citation type="journal article" date="2005" name="PLoS Biol.">
        <title>The genomes of Oryza sativa: a history of duplications.</title>
        <authorList>
            <person name="Yu J."/>
            <person name="Wang J."/>
            <person name="Lin W."/>
            <person name="Li S."/>
            <person name="Li H."/>
            <person name="Zhou J."/>
            <person name="Ni P."/>
            <person name="Dong W."/>
            <person name="Hu S."/>
            <person name="Zeng C."/>
            <person name="Zhang J."/>
            <person name="Zhang Y."/>
            <person name="Li R."/>
            <person name="Xu Z."/>
            <person name="Li S."/>
            <person name="Li X."/>
            <person name="Zheng H."/>
            <person name="Cong L."/>
            <person name="Lin L."/>
            <person name="Yin J."/>
            <person name="Geng J."/>
            <person name="Li G."/>
            <person name="Shi J."/>
            <person name="Liu J."/>
            <person name="Lv H."/>
            <person name="Li J."/>
            <person name="Wang J."/>
            <person name="Deng Y."/>
            <person name="Ran L."/>
            <person name="Shi X."/>
            <person name="Wang X."/>
            <person name="Wu Q."/>
            <person name="Li C."/>
            <person name="Ren X."/>
            <person name="Wang J."/>
            <person name="Wang X."/>
            <person name="Li D."/>
            <person name="Liu D."/>
            <person name="Zhang X."/>
            <person name="Ji Z."/>
            <person name="Zhao W."/>
            <person name="Sun Y."/>
            <person name="Zhang Z."/>
            <person name="Bao J."/>
            <person name="Han Y."/>
            <person name="Dong L."/>
            <person name="Ji J."/>
            <person name="Chen P."/>
            <person name="Wu S."/>
            <person name="Liu J."/>
            <person name="Xiao Y."/>
            <person name="Bu D."/>
            <person name="Tan J."/>
            <person name="Yang L."/>
            <person name="Ye C."/>
            <person name="Zhang J."/>
            <person name="Xu J."/>
            <person name="Zhou Y."/>
            <person name="Yu Y."/>
            <person name="Zhang B."/>
            <person name="Zhuang S."/>
            <person name="Wei H."/>
            <person name="Liu B."/>
            <person name="Lei M."/>
            <person name="Yu H."/>
            <person name="Li Y."/>
            <person name="Xu H."/>
            <person name="Wei S."/>
            <person name="He X."/>
            <person name="Fang L."/>
            <person name="Zhang Z."/>
            <person name="Zhang Y."/>
            <person name="Huang X."/>
            <person name="Su Z."/>
            <person name="Tong W."/>
            <person name="Li J."/>
            <person name="Tong Z."/>
            <person name="Li S."/>
            <person name="Ye J."/>
            <person name="Wang L."/>
            <person name="Fang L."/>
            <person name="Lei T."/>
            <person name="Chen C.-S."/>
            <person name="Chen H.-C."/>
            <person name="Xu Z."/>
            <person name="Li H."/>
            <person name="Huang H."/>
            <person name="Zhang F."/>
            <person name="Xu H."/>
            <person name="Li N."/>
            <person name="Zhao C."/>
            <person name="Li S."/>
            <person name="Dong L."/>
            <person name="Huang Y."/>
            <person name="Li L."/>
            <person name="Xi Y."/>
            <person name="Qi Q."/>
            <person name="Li W."/>
            <person name="Zhang B."/>
            <person name="Hu W."/>
            <person name="Zhang Y."/>
            <person name="Tian X."/>
            <person name="Jiao Y."/>
            <person name="Liang X."/>
            <person name="Jin J."/>
            <person name="Gao L."/>
            <person name="Zheng W."/>
            <person name="Hao B."/>
            <person name="Liu S.-M."/>
            <person name="Wang W."/>
            <person name="Yuan L."/>
            <person name="Cao M."/>
            <person name="McDermott J."/>
            <person name="Samudrala R."/>
            <person name="Wang J."/>
            <person name="Wong G.K.-S."/>
            <person name="Yang H."/>
        </authorList>
    </citation>
    <scope>NUCLEOTIDE SEQUENCE [LARGE SCALE GENOMIC DNA]</scope>
    <source>
        <strain>cv. Nipponbare</strain>
    </source>
</reference>
<reference key="7">
    <citation type="journal article" date="2003" name="Science">
        <title>Collection, mapping, and annotation of over 28,000 cDNA clones from japonica rice.</title>
        <authorList>
            <consortium name="The rice full-length cDNA consortium"/>
        </authorList>
    </citation>
    <scope>NUCLEOTIDE SEQUENCE [LARGE SCALE MRNA]</scope>
    <source>
        <strain>cv. Nipponbare</strain>
    </source>
</reference>
<reference key="8">
    <citation type="journal article" date="2006" name="Plant Physiol.">
        <title>Genome-wide analysis of basic/helix-loop-helix transcription factor family in rice and Arabidopsis.</title>
        <authorList>
            <person name="Li X."/>
            <person name="Duan X."/>
            <person name="Jiang H."/>
            <person name="Sun Y."/>
            <person name="Tang Y."/>
            <person name="Yuan Z."/>
            <person name="Guo J."/>
            <person name="Liang W."/>
            <person name="Chen L."/>
            <person name="Yin J."/>
            <person name="Ma H."/>
            <person name="Wang J."/>
            <person name="Zhang D."/>
        </authorList>
    </citation>
    <scope>GENE FAMILY</scope>
    <scope>NOMENCLATURE</scope>
</reference>
<reference key="9">
    <citation type="journal article" date="2012" name="Plant Cell Physiol.">
        <title>The bHLH Rac Immunity1 (RAI1) is activated by OsRac1 via OsMAPK3 and OsMAPK6 in rice immunity.</title>
        <authorList>
            <person name="Kim S.H."/>
            <person name="Oikawa T."/>
            <person name="Kyozuka J."/>
            <person name="Wong H.L."/>
            <person name="Umemura K."/>
            <person name="Kishi-Kaboshi M."/>
            <person name="Takahashi A."/>
            <person name="Kawano Y."/>
            <person name="Kawasaki T."/>
            <person name="Shimamoto K."/>
        </authorList>
    </citation>
    <scope>FUNCTION</scope>
    <scope>SUBUNIT</scope>
    <scope>PHOSPHORYLATION</scope>
    <scope>SUBCELLULAR LOCATION</scope>
    <scope>INDUCTION</scope>
</reference>
<protein>
    <recommendedName>
        <fullName evidence="6">Transcription factor BHLH3</fullName>
    </recommendedName>
    <alternativeName>
        <fullName evidence="4">Basic helix-loop-helix protein 3</fullName>
        <shortName evidence="4">OsbHLH003</shortName>
    </alternativeName>
    <alternativeName>
        <fullName evidence="5">Protein RAC IMMUNITY 1</fullName>
    </alternativeName>
    <alternativeName>
        <fullName evidence="6">bHLH transcription factor 3</fullName>
    </alternativeName>
</protein>
<accession>Q10S44</accession>
<accession>B9FAY4</accession>
<accession>F1DK91</accession>
<accession>Q0DVD5</accession>
<accession>Q8H8E4</accession>
<feature type="chain" id="PRO_0000452037" description="Transcription factor BHLH3">
    <location>
        <begin position="1"/>
        <end position="354"/>
    </location>
</feature>
<feature type="domain" description="bHLH" evidence="1">
    <location>
        <begin position="178"/>
        <end position="227"/>
    </location>
</feature>
<feature type="region of interest" description="Disordered" evidence="2">
    <location>
        <begin position="124"/>
        <end position="143"/>
    </location>
</feature>
<feature type="region of interest" description="Basic motif" evidence="1">
    <location>
        <begin position="178"/>
        <end position="191"/>
    </location>
</feature>
<feature type="region of interest" description="Helix-loop-helix motif" evidence="1">
    <location>
        <begin position="192"/>
        <end position="227"/>
    </location>
</feature>
<feature type="sequence conflict" description="In Ref. 1; ADX60261." evidence="6" ref="1">
    <original>G</original>
    <variation>D</variation>
    <location>
        <position position="319"/>
    </location>
</feature>
<feature type="sequence conflict" description="In Ref. 1; ADX60261." evidence="6" ref="1">
    <original>I</original>
    <variation>N</variation>
    <location>
        <position position="339"/>
    </location>
</feature>
<sequence length="354" mass="37890">MELDEESFLDELMSLRRDGSAPWQAPPYPGGGGGGGGGGMMMSDLLFYGGDGGSAEARGGMDASPFQELASMAAPPPQHPHEEFNFDCLSEVCNPYRSCGAQLVPSEAASQTQTQLTPLRDAMVAEEETSGDKALLHGGGGSSSPTFMFGGGAGESSEMMAGIRGVGGGVHPRSKLHGTPSKNLMAERRRRKRLNDRLSMLRSIVPKISKMDRTSILGDTIDYVKELTERIKTLEEEIGVTPEELDLLNTMKDSSSGNNNEMLVRNSTKFDVENRGSGNTRIEICCPANPGVLLSTVSALEVLGLEIEQCVVSCFSDFGMQASCLQEDGKRQVVSTDEIKQTLFRSAGYGGRCL</sequence>
<dbReference type="EMBL" id="HQ858849">
    <property type="protein sequence ID" value="ADX60261.1"/>
    <property type="molecule type" value="mRNA"/>
</dbReference>
<dbReference type="EMBL" id="AC099399">
    <property type="protein sequence ID" value="AAN05491.1"/>
    <property type="status" value="ALT_SEQ"/>
    <property type="molecule type" value="Genomic_DNA"/>
</dbReference>
<dbReference type="EMBL" id="DP000009">
    <property type="protein sequence ID" value="ABF93851.1"/>
    <property type="molecule type" value="Genomic_DNA"/>
</dbReference>
<dbReference type="EMBL" id="AP008209">
    <property type="protein sequence ID" value="BAF10803.2"/>
    <property type="status" value="ALT_SEQ"/>
    <property type="molecule type" value="Genomic_DNA"/>
</dbReference>
<dbReference type="EMBL" id="AP014959">
    <property type="protein sequence ID" value="BAS82180.1"/>
    <property type="molecule type" value="Genomic_DNA"/>
</dbReference>
<dbReference type="EMBL" id="CM000140">
    <property type="protein sequence ID" value="EEE58284.1"/>
    <property type="molecule type" value="Genomic_DNA"/>
</dbReference>
<dbReference type="EMBL" id="AK060029">
    <property type="protein sequence ID" value="BAG87280.1"/>
    <property type="molecule type" value="mRNA"/>
</dbReference>
<dbReference type="RefSeq" id="XP_015629094.1">
    <property type="nucleotide sequence ID" value="XM_015773608.1"/>
</dbReference>
<dbReference type="SMR" id="Q10S44"/>
<dbReference type="FunCoup" id="Q10S44">
    <property type="interactions" value="1284"/>
</dbReference>
<dbReference type="STRING" id="39947.Q10S44"/>
<dbReference type="PaxDb" id="39947-Q10S44"/>
<dbReference type="EnsemblPlants" id="Os03t0135700-01">
    <property type="protein sequence ID" value="Os03t0135700-01"/>
    <property type="gene ID" value="Os03g0135700"/>
</dbReference>
<dbReference type="EnsemblPlants" id="Os03t0135700-02">
    <property type="protein sequence ID" value="Os03t0135700-02"/>
    <property type="gene ID" value="Os03g0135700"/>
</dbReference>
<dbReference type="Gramene" id="Os03t0135700-01">
    <property type="protein sequence ID" value="Os03t0135700-01"/>
    <property type="gene ID" value="Os03g0135700"/>
</dbReference>
<dbReference type="Gramene" id="Os03t0135700-02">
    <property type="protein sequence ID" value="Os03t0135700-02"/>
    <property type="gene ID" value="Os03g0135700"/>
</dbReference>
<dbReference type="KEGG" id="dosa:Os03g0135700"/>
<dbReference type="eggNOG" id="ENOG502QQHH">
    <property type="taxonomic scope" value="Eukaryota"/>
</dbReference>
<dbReference type="HOGENOM" id="CLU_035660_1_2_1"/>
<dbReference type="InParanoid" id="Q10S44"/>
<dbReference type="OMA" id="QHPHEEF"/>
<dbReference type="OrthoDB" id="607864at2759"/>
<dbReference type="Proteomes" id="UP000000763">
    <property type="component" value="Chromosome 3"/>
</dbReference>
<dbReference type="Proteomes" id="UP000007752">
    <property type="component" value="Chromosome 3"/>
</dbReference>
<dbReference type="Proteomes" id="UP000059680">
    <property type="component" value="Chromosome 3"/>
</dbReference>
<dbReference type="GO" id="GO:0005737">
    <property type="term" value="C:cytoplasm"/>
    <property type="evidence" value="ECO:0000314"/>
    <property type="project" value="UniProtKB"/>
</dbReference>
<dbReference type="GO" id="GO:0005634">
    <property type="term" value="C:nucleus"/>
    <property type="evidence" value="ECO:0000314"/>
    <property type="project" value="UniProtKB"/>
</dbReference>
<dbReference type="GO" id="GO:0003700">
    <property type="term" value="F:DNA-binding transcription factor activity"/>
    <property type="evidence" value="ECO:0000314"/>
    <property type="project" value="UniProtKB"/>
</dbReference>
<dbReference type="GO" id="GO:0046983">
    <property type="term" value="F:protein dimerization activity"/>
    <property type="evidence" value="ECO:0007669"/>
    <property type="project" value="InterPro"/>
</dbReference>
<dbReference type="GO" id="GO:0043565">
    <property type="term" value="F:sequence-specific DNA binding"/>
    <property type="evidence" value="ECO:0000318"/>
    <property type="project" value="GO_Central"/>
</dbReference>
<dbReference type="GO" id="GO:0006952">
    <property type="term" value="P:defense response"/>
    <property type="evidence" value="ECO:0007669"/>
    <property type="project" value="UniProtKB-KW"/>
</dbReference>
<dbReference type="GO" id="GO:0031347">
    <property type="term" value="P:regulation of defense response"/>
    <property type="evidence" value="ECO:0000315"/>
    <property type="project" value="UniProtKB"/>
</dbReference>
<dbReference type="GO" id="GO:0006355">
    <property type="term" value="P:regulation of DNA-templated transcription"/>
    <property type="evidence" value="ECO:0000314"/>
    <property type="project" value="UniProtKB"/>
</dbReference>
<dbReference type="Gene3D" id="4.10.280.10">
    <property type="entry name" value="Helix-loop-helix DNA-binding domain"/>
    <property type="match status" value="1"/>
</dbReference>
<dbReference type="InterPro" id="IPR054502">
    <property type="entry name" value="bHLH-TF_ACT-like_plant"/>
</dbReference>
<dbReference type="InterPro" id="IPR011598">
    <property type="entry name" value="bHLH_dom"/>
</dbReference>
<dbReference type="InterPro" id="IPR036638">
    <property type="entry name" value="HLH_DNA-bd_sf"/>
</dbReference>
<dbReference type="InterPro" id="IPR051358">
    <property type="entry name" value="TF_AMS/ICE1/BHLH6-like"/>
</dbReference>
<dbReference type="PANTHER" id="PTHR31945:SF61">
    <property type="entry name" value="TRANSCRIPTION FACTOR BHLH3"/>
    <property type="match status" value="1"/>
</dbReference>
<dbReference type="PANTHER" id="PTHR31945">
    <property type="entry name" value="TRANSCRIPTION FACTOR SCREAM2-RELATED"/>
    <property type="match status" value="1"/>
</dbReference>
<dbReference type="Pfam" id="PF22754">
    <property type="entry name" value="bHLH-TF_ACT-like_plant"/>
    <property type="match status" value="1"/>
</dbReference>
<dbReference type="Pfam" id="PF00010">
    <property type="entry name" value="HLH"/>
    <property type="match status" value="1"/>
</dbReference>
<dbReference type="SMART" id="SM00353">
    <property type="entry name" value="HLH"/>
    <property type="match status" value="1"/>
</dbReference>
<dbReference type="SUPFAM" id="SSF47459">
    <property type="entry name" value="HLH, helix-loop-helix DNA-binding domain"/>
    <property type="match status" value="1"/>
</dbReference>
<dbReference type="PROSITE" id="PS50888">
    <property type="entry name" value="BHLH"/>
    <property type="match status" value="1"/>
</dbReference>
<proteinExistence type="evidence at protein level"/>